<protein>
    <recommendedName>
        <fullName evidence="1">Ribosome maturation factor RimP</fullName>
    </recommendedName>
</protein>
<gene>
    <name evidence="1" type="primary">rimP</name>
    <name type="ordered locus">CLK_1798</name>
</gene>
<accession>B1KWL1</accession>
<sequence>MSKHNLIENLKKQIEPIVEGLNYELYHIEFVKEGKENYLRIYIDSENGASLEGCEKVSRAVSELLDDIDPIQESYYLEVSSPGIDRVLYTDKHLEKYKGYNIILNLYSPIDKKKKYEGELIDFNENEINIKVEENIVTIPREKISKTTLKGEL</sequence>
<evidence type="ECO:0000255" key="1">
    <source>
        <dbReference type="HAMAP-Rule" id="MF_01077"/>
    </source>
</evidence>
<feature type="chain" id="PRO_1000136749" description="Ribosome maturation factor RimP">
    <location>
        <begin position="1"/>
        <end position="153"/>
    </location>
</feature>
<comment type="function">
    <text evidence="1">Required for maturation of 30S ribosomal subunits.</text>
</comment>
<comment type="subcellular location">
    <subcellularLocation>
        <location evidence="1">Cytoplasm</location>
    </subcellularLocation>
</comment>
<comment type="similarity">
    <text evidence="1">Belongs to the RimP family.</text>
</comment>
<proteinExistence type="inferred from homology"/>
<organism>
    <name type="scientific">Clostridium botulinum (strain Loch Maree / Type A3)</name>
    <dbReference type="NCBI Taxonomy" id="498214"/>
    <lineage>
        <taxon>Bacteria</taxon>
        <taxon>Bacillati</taxon>
        <taxon>Bacillota</taxon>
        <taxon>Clostridia</taxon>
        <taxon>Eubacteriales</taxon>
        <taxon>Clostridiaceae</taxon>
        <taxon>Clostridium</taxon>
    </lineage>
</organism>
<dbReference type="EMBL" id="CP000962">
    <property type="protein sequence ID" value="ACA54512.1"/>
    <property type="molecule type" value="Genomic_DNA"/>
</dbReference>
<dbReference type="RefSeq" id="WP_012342608.1">
    <property type="nucleotide sequence ID" value="NC_010520.1"/>
</dbReference>
<dbReference type="SMR" id="B1KWL1"/>
<dbReference type="KEGG" id="cbl:CLK_1798"/>
<dbReference type="HOGENOM" id="CLU_070525_2_0_9"/>
<dbReference type="GO" id="GO:0005829">
    <property type="term" value="C:cytosol"/>
    <property type="evidence" value="ECO:0007669"/>
    <property type="project" value="TreeGrafter"/>
</dbReference>
<dbReference type="GO" id="GO:0000028">
    <property type="term" value="P:ribosomal small subunit assembly"/>
    <property type="evidence" value="ECO:0007669"/>
    <property type="project" value="TreeGrafter"/>
</dbReference>
<dbReference type="GO" id="GO:0006412">
    <property type="term" value="P:translation"/>
    <property type="evidence" value="ECO:0007669"/>
    <property type="project" value="TreeGrafter"/>
</dbReference>
<dbReference type="CDD" id="cd01734">
    <property type="entry name" value="YlxS_C"/>
    <property type="match status" value="1"/>
</dbReference>
<dbReference type="FunFam" id="2.30.30.180:FF:000007">
    <property type="entry name" value="Ribosome maturation factor RimP"/>
    <property type="match status" value="1"/>
</dbReference>
<dbReference type="FunFam" id="3.30.300.70:FF:000001">
    <property type="entry name" value="Ribosome maturation factor RimP"/>
    <property type="match status" value="1"/>
</dbReference>
<dbReference type="Gene3D" id="2.30.30.180">
    <property type="entry name" value="Ribosome maturation factor RimP, C-terminal domain"/>
    <property type="match status" value="1"/>
</dbReference>
<dbReference type="Gene3D" id="3.30.300.70">
    <property type="entry name" value="RimP-like superfamily, N-terminal"/>
    <property type="match status" value="1"/>
</dbReference>
<dbReference type="HAMAP" id="MF_01077">
    <property type="entry name" value="RimP"/>
    <property type="match status" value="1"/>
</dbReference>
<dbReference type="InterPro" id="IPR003728">
    <property type="entry name" value="Ribosome_maturation_RimP"/>
</dbReference>
<dbReference type="InterPro" id="IPR028998">
    <property type="entry name" value="RimP_C"/>
</dbReference>
<dbReference type="InterPro" id="IPR036847">
    <property type="entry name" value="RimP_C_sf"/>
</dbReference>
<dbReference type="InterPro" id="IPR028989">
    <property type="entry name" value="RimP_N"/>
</dbReference>
<dbReference type="InterPro" id="IPR035956">
    <property type="entry name" value="RimP_N_sf"/>
</dbReference>
<dbReference type="NCBIfam" id="NF000934">
    <property type="entry name" value="PRK00092.3-1"/>
    <property type="match status" value="1"/>
</dbReference>
<dbReference type="PANTHER" id="PTHR33867">
    <property type="entry name" value="RIBOSOME MATURATION FACTOR RIMP"/>
    <property type="match status" value="1"/>
</dbReference>
<dbReference type="PANTHER" id="PTHR33867:SF1">
    <property type="entry name" value="RIBOSOME MATURATION FACTOR RIMP"/>
    <property type="match status" value="1"/>
</dbReference>
<dbReference type="Pfam" id="PF17384">
    <property type="entry name" value="DUF150_C"/>
    <property type="match status" value="1"/>
</dbReference>
<dbReference type="Pfam" id="PF02576">
    <property type="entry name" value="RimP_N"/>
    <property type="match status" value="1"/>
</dbReference>
<dbReference type="SUPFAM" id="SSF74942">
    <property type="entry name" value="YhbC-like, C-terminal domain"/>
    <property type="match status" value="1"/>
</dbReference>
<dbReference type="SUPFAM" id="SSF75420">
    <property type="entry name" value="YhbC-like, N-terminal domain"/>
    <property type="match status" value="1"/>
</dbReference>
<keyword id="KW-0963">Cytoplasm</keyword>
<keyword id="KW-0690">Ribosome biogenesis</keyword>
<reference key="1">
    <citation type="journal article" date="2007" name="PLoS ONE">
        <title>Analysis of the neurotoxin complex genes in Clostridium botulinum A1-A4 and B1 strains: BoNT/A3, /Ba4 and /B1 clusters are located within plasmids.</title>
        <authorList>
            <person name="Smith T.J."/>
            <person name="Hill K.K."/>
            <person name="Foley B.T."/>
            <person name="Detter J.C."/>
            <person name="Munk A.C."/>
            <person name="Bruce D.C."/>
            <person name="Doggett N.A."/>
            <person name="Smith L.A."/>
            <person name="Marks J.D."/>
            <person name="Xie G."/>
            <person name="Brettin T.S."/>
        </authorList>
    </citation>
    <scope>NUCLEOTIDE SEQUENCE [LARGE SCALE GENOMIC DNA]</scope>
    <source>
        <strain>Loch Maree / Type A3</strain>
    </source>
</reference>
<name>RIMP_CLOBM</name>